<accession>A1V9Q3</accession>
<gene>
    <name evidence="1" type="primary">dnaJ</name>
    <name type="ordered locus">Dvul_0145</name>
</gene>
<feature type="chain" id="PRO_1000085184" description="Chaperone protein DnaJ">
    <location>
        <begin position="1"/>
        <end position="376"/>
    </location>
</feature>
<feature type="domain" description="J" evidence="1">
    <location>
        <begin position="5"/>
        <end position="70"/>
    </location>
</feature>
<feature type="repeat" description="CXXCXGXG motif">
    <location>
        <begin position="150"/>
        <end position="157"/>
    </location>
</feature>
<feature type="repeat" description="CXXCXGXG motif">
    <location>
        <begin position="167"/>
        <end position="174"/>
    </location>
</feature>
<feature type="repeat" description="CXXCXGXG motif">
    <location>
        <begin position="189"/>
        <end position="196"/>
    </location>
</feature>
<feature type="repeat" description="CXXCXGXG motif">
    <location>
        <begin position="203"/>
        <end position="210"/>
    </location>
</feature>
<feature type="zinc finger region" description="CR-type" evidence="1">
    <location>
        <begin position="137"/>
        <end position="215"/>
    </location>
</feature>
<feature type="binding site" evidence="1">
    <location>
        <position position="150"/>
    </location>
    <ligand>
        <name>Zn(2+)</name>
        <dbReference type="ChEBI" id="CHEBI:29105"/>
        <label>1</label>
    </ligand>
</feature>
<feature type="binding site" evidence="1">
    <location>
        <position position="153"/>
    </location>
    <ligand>
        <name>Zn(2+)</name>
        <dbReference type="ChEBI" id="CHEBI:29105"/>
        <label>1</label>
    </ligand>
</feature>
<feature type="binding site" evidence="1">
    <location>
        <position position="167"/>
    </location>
    <ligand>
        <name>Zn(2+)</name>
        <dbReference type="ChEBI" id="CHEBI:29105"/>
        <label>2</label>
    </ligand>
</feature>
<feature type="binding site" evidence="1">
    <location>
        <position position="170"/>
    </location>
    <ligand>
        <name>Zn(2+)</name>
        <dbReference type="ChEBI" id="CHEBI:29105"/>
        <label>2</label>
    </ligand>
</feature>
<feature type="binding site" evidence="1">
    <location>
        <position position="189"/>
    </location>
    <ligand>
        <name>Zn(2+)</name>
        <dbReference type="ChEBI" id="CHEBI:29105"/>
        <label>2</label>
    </ligand>
</feature>
<feature type="binding site" evidence="1">
    <location>
        <position position="192"/>
    </location>
    <ligand>
        <name>Zn(2+)</name>
        <dbReference type="ChEBI" id="CHEBI:29105"/>
        <label>2</label>
    </ligand>
</feature>
<feature type="binding site" evidence="1">
    <location>
        <position position="203"/>
    </location>
    <ligand>
        <name>Zn(2+)</name>
        <dbReference type="ChEBI" id="CHEBI:29105"/>
        <label>1</label>
    </ligand>
</feature>
<feature type="binding site" evidence="1">
    <location>
        <position position="206"/>
    </location>
    <ligand>
        <name>Zn(2+)</name>
        <dbReference type="ChEBI" id="CHEBI:29105"/>
        <label>1</label>
    </ligand>
</feature>
<name>DNAJ_NITV4</name>
<protein>
    <recommendedName>
        <fullName evidence="1">Chaperone protein DnaJ</fullName>
    </recommendedName>
</protein>
<proteinExistence type="inferred from homology"/>
<organism>
    <name type="scientific">Nitratidesulfovibrio vulgaris (strain DP4)</name>
    <name type="common">Desulfovibrio vulgaris</name>
    <dbReference type="NCBI Taxonomy" id="391774"/>
    <lineage>
        <taxon>Bacteria</taxon>
        <taxon>Pseudomonadati</taxon>
        <taxon>Thermodesulfobacteriota</taxon>
        <taxon>Desulfovibrionia</taxon>
        <taxon>Desulfovibrionales</taxon>
        <taxon>Desulfovibrionaceae</taxon>
        <taxon>Nitratidesulfovibrio</taxon>
    </lineage>
</organism>
<evidence type="ECO:0000255" key="1">
    <source>
        <dbReference type="HAMAP-Rule" id="MF_01152"/>
    </source>
</evidence>
<dbReference type="EMBL" id="CP000527">
    <property type="protein sequence ID" value="ABM27169.1"/>
    <property type="molecule type" value="Genomic_DNA"/>
</dbReference>
<dbReference type="RefSeq" id="WP_010940501.1">
    <property type="nucleotide sequence ID" value="NC_008751.1"/>
</dbReference>
<dbReference type="SMR" id="A1V9Q3"/>
<dbReference type="KEGG" id="dvl:Dvul_0145"/>
<dbReference type="HOGENOM" id="CLU_017633_0_7_7"/>
<dbReference type="Proteomes" id="UP000009173">
    <property type="component" value="Chromosome"/>
</dbReference>
<dbReference type="GO" id="GO:0005737">
    <property type="term" value="C:cytoplasm"/>
    <property type="evidence" value="ECO:0007669"/>
    <property type="project" value="UniProtKB-SubCell"/>
</dbReference>
<dbReference type="GO" id="GO:0005524">
    <property type="term" value="F:ATP binding"/>
    <property type="evidence" value="ECO:0007669"/>
    <property type="project" value="InterPro"/>
</dbReference>
<dbReference type="GO" id="GO:0031072">
    <property type="term" value="F:heat shock protein binding"/>
    <property type="evidence" value="ECO:0007669"/>
    <property type="project" value="InterPro"/>
</dbReference>
<dbReference type="GO" id="GO:0051082">
    <property type="term" value="F:unfolded protein binding"/>
    <property type="evidence" value="ECO:0007669"/>
    <property type="project" value="UniProtKB-UniRule"/>
</dbReference>
<dbReference type="GO" id="GO:0008270">
    <property type="term" value="F:zinc ion binding"/>
    <property type="evidence" value="ECO:0007669"/>
    <property type="project" value="UniProtKB-UniRule"/>
</dbReference>
<dbReference type="GO" id="GO:0051085">
    <property type="term" value="P:chaperone cofactor-dependent protein refolding"/>
    <property type="evidence" value="ECO:0007669"/>
    <property type="project" value="TreeGrafter"/>
</dbReference>
<dbReference type="GO" id="GO:0006260">
    <property type="term" value="P:DNA replication"/>
    <property type="evidence" value="ECO:0007669"/>
    <property type="project" value="UniProtKB-KW"/>
</dbReference>
<dbReference type="GO" id="GO:0042026">
    <property type="term" value="P:protein refolding"/>
    <property type="evidence" value="ECO:0007669"/>
    <property type="project" value="TreeGrafter"/>
</dbReference>
<dbReference type="GO" id="GO:0009408">
    <property type="term" value="P:response to heat"/>
    <property type="evidence" value="ECO:0007669"/>
    <property type="project" value="InterPro"/>
</dbReference>
<dbReference type="CDD" id="cd06257">
    <property type="entry name" value="DnaJ"/>
    <property type="match status" value="1"/>
</dbReference>
<dbReference type="CDD" id="cd10747">
    <property type="entry name" value="DnaJ_C"/>
    <property type="match status" value="1"/>
</dbReference>
<dbReference type="CDD" id="cd10719">
    <property type="entry name" value="DnaJ_zf"/>
    <property type="match status" value="1"/>
</dbReference>
<dbReference type="FunFam" id="1.10.287.110:FF:000034">
    <property type="entry name" value="Chaperone protein DnaJ"/>
    <property type="match status" value="1"/>
</dbReference>
<dbReference type="FunFam" id="2.60.260.20:FF:000005">
    <property type="entry name" value="Chaperone protein dnaJ 1, mitochondrial"/>
    <property type="match status" value="1"/>
</dbReference>
<dbReference type="FunFam" id="2.10.230.10:FF:000002">
    <property type="entry name" value="Molecular chaperone DnaJ"/>
    <property type="match status" value="1"/>
</dbReference>
<dbReference type="Gene3D" id="1.10.287.110">
    <property type="entry name" value="DnaJ domain"/>
    <property type="match status" value="1"/>
</dbReference>
<dbReference type="Gene3D" id="2.10.230.10">
    <property type="entry name" value="Heat shock protein DnaJ, cysteine-rich domain"/>
    <property type="match status" value="1"/>
</dbReference>
<dbReference type="Gene3D" id="2.60.260.20">
    <property type="entry name" value="Urease metallochaperone UreE, N-terminal domain"/>
    <property type="match status" value="2"/>
</dbReference>
<dbReference type="HAMAP" id="MF_01152">
    <property type="entry name" value="DnaJ"/>
    <property type="match status" value="1"/>
</dbReference>
<dbReference type="InterPro" id="IPR012724">
    <property type="entry name" value="DnaJ"/>
</dbReference>
<dbReference type="InterPro" id="IPR002939">
    <property type="entry name" value="DnaJ_C"/>
</dbReference>
<dbReference type="InterPro" id="IPR001623">
    <property type="entry name" value="DnaJ_domain"/>
</dbReference>
<dbReference type="InterPro" id="IPR018253">
    <property type="entry name" value="DnaJ_domain_CS"/>
</dbReference>
<dbReference type="InterPro" id="IPR008971">
    <property type="entry name" value="HSP40/DnaJ_pept-bd"/>
</dbReference>
<dbReference type="InterPro" id="IPR001305">
    <property type="entry name" value="HSP_DnaJ_Cys-rich_dom"/>
</dbReference>
<dbReference type="InterPro" id="IPR036410">
    <property type="entry name" value="HSP_DnaJ_Cys-rich_dom_sf"/>
</dbReference>
<dbReference type="InterPro" id="IPR036869">
    <property type="entry name" value="J_dom_sf"/>
</dbReference>
<dbReference type="NCBIfam" id="TIGR02349">
    <property type="entry name" value="DnaJ_bact"/>
    <property type="match status" value="1"/>
</dbReference>
<dbReference type="NCBIfam" id="NF008035">
    <property type="entry name" value="PRK10767.1"/>
    <property type="match status" value="1"/>
</dbReference>
<dbReference type="NCBIfam" id="NF010894">
    <property type="entry name" value="PRK14301.1"/>
    <property type="match status" value="1"/>
</dbReference>
<dbReference type="PANTHER" id="PTHR43096:SF10">
    <property type="entry name" value="CHAPERONE PROTEIN DNAJ A6, CHLOROPLASTIC"/>
    <property type="match status" value="1"/>
</dbReference>
<dbReference type="PANTHER" id="PTHR43096">
    <property type="entry name" value="DNAJ HOMOLOG 1, MITOCHONDRIAL-RELATED"/>
    <property type="match status" value="1"/>
</dbReference>
<dbReference type="Pfam" id="PF00226">
    <property type="entry name" value="DnaJ"/>
    <property type="match status" value="1"/>
</dbReference>
<dbReference type="Pfam" id="PF01556">
    <property type="entry name" value="DnaJ_C"/>
    <property type="match status" value="1"/>
</dbReference>
<dbReference type="Pfam" id="PF00684">
    <property type="entry name" value="DnaJ_CXXCXGXG"/>
    <property type="match status" value="1"/>
</dbReference>
<dbReference type="PRINTS" id="PR00625">
    <property type="entry name" value="JDOMAIN"/>
</dbReference>
<dbReference type="SMART" id="SM00271">
    <property type="entry name" value="DnaJ"/>
    <property type="match status" value="1"/>
</dbReference>
<dbReference type="SUPFAM" id="SSF46565">
    <property type="entry name" value="Chaperone J-domain"/>
    <property type="match status" value="1"/>
</dbReference>
<dbReference type="SUPFAM" id="SSF57938">
    <property type="entry name" value="DnaJ/Hsp40 cysteine-rich domain"/>
    <property type="match status" value="1"/>
</dbReference>
<dbReference type="SUPFAM" id="SSF49493">
    <property type="entry name" value="HSP40/DnaJ peptide-binding domain"/>
    <property type="match status" value="2"/>
</dbReference>
<dbReference type="PROSITE" id="PS00636">
    <property type="entry name" value="DNAJ_1"/>
    <property type="match status" value="1"/>
</dbReference>
<dbReference type="PROSITE" id="PS50076">
    <property type="entry name" value="DNAJ_2"/>
    <property type="match status" value="1"/>
</dbReference>
<dbReference type="PROSITE" id="PS51188">
    <property type="entry name" value="ZF_CR"/>
    <property type="match status" value="1"/>
</dbReference>
<keyword id="KW-0143">Chaperone</keyword>
<keyword id="KW-0963">Cytoplasm</keyword>
<keyword id="KW-0235">DNA replication</keyword>
<keyword id="KW-0479">Metal-binding</keyword>
<keyword id="KW-0677">Repeat</keyword>
<keyword id="KW-0346">Stress response</keyword>
<keyword id="KW-0862">Zinc</keyword>
<keyword id="KW-0863">Zinc-finger</keyword>
<reference key="1">
    <citation type="journal article" date="2009" name="Environ. Microbiol.">
        <title>Contribution of mobile genetic elements to Desulfovibrio vulgaris genome plasticity.</title>
        <authorList>
            <person name="Walker C.B."/>
            <person name="Stolyar S."/>
            <person name="Chivian D."/>
            <person name="Pinel N."/>
            <person name="Gabster J.A."/>
            <person name="Dehal P.S."/>
            <person name="He Z."/>
            <person name="Yang Z.K."/>
            <person name="Yen H.C."/>
            <person name="Zhou J."/>
            <person name="Wall J.D."/>
            <person name="Hazen T.C."/>
            <person name="Arkin A.P."/>
            <person name="Stahl D.A."/>
        </authorList>
    </citation>
    <scope>NUCLEOTIDE SEQUENCE [LARGE SCALE GENOMIC DNA]</scope>
    <source>
        <strain>DP4</strain>
    </source>
</reference>
<comment type="function">
    <text evidence="1">Participates actively in the response to hyperosmotic and heat shock by preventing the aggregation of stress-denatured proteins and by disaggregating proteins, also in an autonomous, DnaK-independent fashion. Unfolded proteins bind initially to DnaJ; upon interaction with the DnaJ-bound protein, DnaK hydrolyzes its bound ATP, resulting in the formation of a stable complex. GrpE releases ADP from DnaK; ATP binding to DnaK triggers the release of the substrate protein, thus completing the reaction cycle. Several rounds of ATP-dependent interactions between DnaJ, DnaK and GrpE are required for fully efficient folding. Also involved, together with DnaK and GrpE, in the DNA replication of plasmids through activation of initiation proteins.</text>
</comment>
<comment type="cofactor">
    <cofactor evidence="1">
        <name>Zn(2+)</name>
        <dbReference type="ChEBI" id="CHEBI:29105"/>
    </cofactor>
    <text evidence="1">Binds 2 Zn(2+) ions per monomer.</text>
</comment>
<comment type="subunit">
    <text evidence="1">Homodimer.</text>
</comment>
<comment type="subcellular location">
    <subcellularLocation>
        <location evidence="1">Cytoplasm</location>
    </subcellularLocation>
</comment>
<comment type="domain">
    <text evidence="1">The J domain is necessary and sufficient to stimulate DnaK ATPase activity. Zinc center 1 plays an important role in the autonomous, DnaK-independent chaperone activity of DnaJ. Zinc center 2 is essential for interaction with DnaK and for DnaJ activity.</text>
</comment>
<comment type="similarity">
    <text evidence="1">Belongs to the DnaJ family.</text>
</comment>
<sequence>MSQRDYYEVLGVARDASEDDIKRAYRKLALQYHPDRNPDDPEAEQKFKEAAEAYDVLRDGEKRARYDRFGHAGVGNGGGFGQGFSSNEDIFAHFSDIFGDLFGFAGAAGGRSRGPRPQAGSDLRYNLTISFRQAAKGDEVTLRLPKSVPCDECGGSGAAPGTRPETCRHCGGAGQIRQSQGFFQIAMPCPVCRGEGTVITSPCPKCKGSGQTQQVKELSVRIPAGVDTGNRLRLRGEGEPGIHGGPAGDLYVVISVEDDKTFRRQGQDLVVTREISFVQASLGDRIDVPTLDDDITLDIPAGTQSGEVFRLVDKGLPYLGHGHTGDLLVEIRVVTPTRLTKKQEELLREFALLDEEKPLEKVKKMARKIGKAMGMD</sequence>